<gene>
    <name evidence="1" type="primary">mnmE</name>
    <name evidence="1" type="synonym">trmE</name>
    <name type="ordered locus">Bpet5001</name>
</gene>
<organism>
    <name type="scientific">Bordetella petrii (strain ATCC BAA-461 / DSM 12804 / CCUG 43448)</name>
    <dbReference type="NCBI Taxonomy" id="340100"/>
    <lineage>
        <taxon>Bacteria</taxon>
        <taxon>Pseudomonadati</taxon>
        <taxon>Pseudomonadota</taxon>
        <taxon>Betaproteobacteria</taxon>
        <taxon>Burkholderiales</taxon>
        <taxon>Alcaligenaceae</taxon>
        <taxon>Bordetella</taxon>
    </lineage>
</organism>
<protein>
    <recommendedName>
        <fullName evidence="1">tRNA modification GTPase MnmE</fullName>
        <ecNumber evidence="1">3.6.-.-</ecNumber>
    </recommendedName>
</protein>
<accession>A9IJ97</accession>
<dbReference type="EC" id="3.6.-.-" evidence="1"/>
<dbReference type="EMBL" id="AM902716">
    <property type="protein sequence ID" value="CAP45353.1"/>
    <property type="molecule type" value="Genomic_DNA"/>
</dbReference>
<dbReference type="SMR" id="A9IJ97"/>
<dbReference type="STRING" id="94624.Bpet5001"/>
<dbReference type="KEGG" id="bpt:Bpet5001"/>
<dbReference type="eggNOG" id="COG0486">
    <property type="taxonomic scope" value="Bacteria"/>
</dbReference>
<dbReference type="Proteomes" id="UP000001225">
    <property type="component" value="Chromosome"/>
</dbReference>
<dbReference type="GO" id="GO:0005829">
    <property type="term" value="C:cytosol"/>
    <property type="evidence" value="ECO:0007669"/>
    <property type="project" value="TreeGrafter"/>
</dbReference>
<dbReference type="GO" id="GO:0005525">
    <property type="term" value="F:GTP binding"/>
    <property type="evidence" value="ECO:0007669"/>
    <property type="project" value="UniProtKB-UniRule"/>
</dbReference>
<dbReference type="GO" id="GO:0003924">
    <property type="term" value="F:GTPase activity"/>
    <property type="evidence" value="ECO:0007669"/>
    <property type="project" value="UniProtKB-UniRule"/>
</dbReference>
<dbReference type="GO" id="GO:0046872">
    <property type="term" value="F:metal ion binding"/>
    <property type="evidence" value="ECO:0007669"/>
    <property type="project" value="UniProtKB-KW"/>
</dbReference>
<dbReference type="GO" id="GO:0030488">
    <property type="term" value="P:tRNA methylation"/>
    <property type="evidence" value="ECO:0007669"/>
    <property type="project" value="TreeGrafter"/>
</dbReference>
<dbReference type="GO" id="GO:0002098">
    <property type="term" value="P:tRNA wobble uridine modification"/>
    <property type="evidence" value="ECO:0007669"/>
    <property type="project" value="TreeGrafter"/>
</dbReference>
<dbReference type="CDD" id="cd04164">
    <property type="entry name" value="trmE"/>
    <property type="match status" value="1"/>
</dbReference>
<dbReference type="CDD" id="cd14858">
    <property type="entry name" value="TrmE_N"/>
    <property type="match status" value="1"/>
</dbReference>
<dbReference type="FunFam" id="3.40.50.300:FF:001376">
    <property type="entry name" value="tRNA modification GTPase MnmE"/>
    <property type="match status" value="1"/>
</dbReference>
<dbReference type="Gene3D" id="3.40.50.300">
    <property type="entry name" value="P-loop containing nucleotide triphosphate hydrolases"/>
    <property type="match status" value="1"/>
</dbReference>
<dbReference type="Gene3D" id="3.30.1360.120">
    <property type="entry name" value="Probable tRNA modification gtpase trme, domain 1"/>
    <property type="match status" value="1"/>
</dbReference>
<dbReference type="Gene3D" id="1.20.120.430">
    <property type="entry name" value="tRNA modification GTPase MnmE domain 2"/>
    <property type="match status" value="1"/>
</dbReference>
<dbReference type="HAMAP" id="MF_00379">
    <property type="entry name" value="GTPase_MnmE"/>
    <property type="match status" value="1"/>
</dbReference>
<dbReference type="InterPro" id="IPR031168">
    <property type="entry name" value="G_TrmE"/>
</dbReference>
<dbReference type="InterPro" id="IPR006073">
    <property type="entry name" value="GTP-bd"/>
</dbReference>
<dbReference type="InterPro" id="IPR018948">
    <property type="entry name" value="GTP-bd_TrmE_N"/>
</dbReference>
<dbReference type="InterPro" id="IPR004520">
    <property type="entry name" value="GTPase_MnmE"/>
</dbReference>
<dbReference type="InterPro" id="IPR027368">
    <property type="entry name" value="MnmE_dom2"/>
</dbReference>
<dbReference type="InterPro" id="IPR025867">
    <property type="entry name" value="MnmE_helical"/>
</dbReference>
<dbReference type="InterPro" id="IPR027417">
    <property type="entry name" value="P-loop_NTPase"/>
</dbReference>
<dbReference type="InterPro" id="IPR005225">
    <property type="entry name" value="Small_GTP-bd"/>
</dbReference>
<dbReference type="InterPro" id="IPR027266">
    <property type="entry name" value="TrmE/GcvT_dom1"/>
</dbReference>
<dbReference type="NCBIfam" id="TIGR00450">
    <property type="entry name" value="mnmE_trmE_thdF"/>
    <property type="match status" value="1"/>
</dbReference>
<dbReference type="NCBIfam" id="NF003661">
    <property type="entry name" value="PRK05291.1-3"/>
    <property type="match status" value="1"/>
</dbReference>
<dbReference type="NCBIfam" id="TIGR00231">
    <property type="entry name" value="small_GTP"/>
    <property type="match status" value="1"/>
</dbReference>
<dbReference type="PANTHER" id="PTHR42714">
    <property type="entry name" value="TRNA MODIFICATION GTPASE GTPBP3"/>
    <property type="match status" value="1"/>
</dbReference>
<dbReference type="PANTHER" id="PTHR42714:SF2">
    <property type="entry name" value="TRNA MODIFICATION GTPASE GTPBP3, MITOCHONDRIAL"/>
    <property type="match status" value="1"/>
</dbReference>
<dbReference type="Pfam" id="PF01926">
    <property type="entry name" value="MMR_HSR1"/>
    <property type="match status" value="1"/>
</dbReference>
<dbReference type="Pfam" id="PF12631">
    <property type="entry name" value="MnmE_helical"/>
    <property type="match status" value="1"/>
</dbReference>
<dbReference type="Pfam" id="PF10396">
    <property type="entry name" value="TrmE_N"/>
    <property type="match status" value="1"/>
</dbReference>
<dbReference type="SUPFAM" id="SSF52540">
    <property type="entry name" value="P-loop containing nucleoside triphosphate hydrolases"/>
    <property type="match status" value="1"/>
</dbReference>
<dbReference type="SUPFAM" id="SSF116878">
    <property type="entry name" value="TrmE connector domain"/>
    <property type="match status" value="1"/>
</dbReference>
<dbReference type="PROSITE" id="PS51709">
    <property type="entry name" value="G_TRME"/>
    <property type="match status" value="1"/>
</dbReference>
<proteinExistence type="inferred from homology"/>
<feature type="chain" id="PRO_0000345722" description="tRNA modification GTPase MnmE">
    <location>
        <begin position="1"/>
        <end position="452"/>
    </location>
</feature>
<feature type="domain" description="TrmE-type G">
    <location>
        <begin position="221"/>
        <end position="374"/>
    </location>
</feature>
<feature type="binding site" evidence="1">
    <location>
        <position position="25"/>
    </location>
    <ligand>
        <name>(6S)-5-formyl-5,6,7,8-tetrahydrofolate</name>
        <dbReference type="ChEBI" id="CHEBI:57457"/>
    </ligand>
</feature>
<feature type="binding site" evidence="1">
    <location>
        <position position="82"/>
    </location>
    <ligand>
        <name>(6S)-5-formyl-5,6,7,8-tetrahydrofolate</name>
        <dbReference type="ChEBI" id="CHEBI:57457"/>
    </ligand>
</feature>
<feature type="binding site" evidence="1">
    <location>
        <position position="125"/>
    </location>
    <ligand>
        <name>(6S)-5-formyl-5,6,7,8-tetrahydrofolate</name>
        <dbReference type="ChEBI" id="CHEBI:57457"/>
    </ligand>
</feature>
<feature type="binding site" evidence="1">
    <location>
        <begin position="231"/>
        <end position="236"/>
    </location>
    <ligand>
        <name>GTP</name>
        <dbReference type="ChEBI" id="CHEBI:37565"/>
    </ligand>
</feature>
<feature type="binding site" evidence="1">
    <location>
        <position position="231"/>
    </location>
    <ligand>
        <name>K(+)</name>
        <dbReference type="ChEBI" id="CHEBI:29103"/>
    </ligand>
</feature>
<feature type="binding site" evidence="1">
    <location>
        <position position="235"/>
    </location>
    <ligand>
        <name>Mg(2+)</name>
        <dbReference type="ChEBI" id="CHEBI:18420"/>
    </ligand>
</feature>
<feature type="binding site" evidence="1">
    <location>
        <begin position="250"/>
        <end position="256"/>
    </location>
    <ligand>
        <name>GTP</name>
        <dbReference type="ChEBI" id="CHEBI:37565"/>
    </ligand>
</feature>
<feature type="binding site" evidence="1">
    <location>
        <position position="250"/>
    </location>
    <ligand>
        <name>K(+)</name>
        <dbReference type="ChEBI" id="CHEBI:29103"/>
    </ligand>
</feature>
<feature type="binding site" evidence="1">
    <location>
        <position position="252"/>
    </location>
    <ligand>
        <name>K(+)</name>
        <dbReference type="ChEBI" id="CHEBI:29103"/>
    </ligand>
</feature>
<feature type="binding site" evidence="1">
    <location>
        <position position="255"/>
    </location>
    <ligand>
        <name>K(+)</name>
        <dbReference type="ChEBI" id="CHEBI:29103"/>
    </ligand>
</feature>
<feature type="binding site" evidence="1">
    <location>
        <position position="256"/>
    </location>
    <ligand>
        <name>Mg(2+)</name>
        <dbReference type="ChEBI" id="CHEBI:18420"/>
    </ligand>
</feature>
<feature type="binding site" evidence="1">
    <location>
        <begin position="275"/>
        <end position="278"/>
    </location>
    <ligand>
        <name>GTP</name>
        <dbReference type="ChEBI" id="CHEBI:37565"/>
    </ligand>
</feature>
<feature type="binding site" evidence="1">
    <location>
        <begin position="355"/>
        <end position="357"/>
    </location>
    <ligand>
        <name>GTP</name>
        <dbReference type="ChEBI" id="CHEBI:37565"/>
    </ligand>
</feature>
<feature type="binding site" evidence="1">
    <location>
        <position position="452"/>
    </location>
    <ligand>
        <name>(6S)-5-formyl-5,6,7,8-tetrahydrofolate</name>
        <dbReference type="ChEBI" id="CHEBI:57457"/>
    </ligand>
</feature>
<reference key="1">
    <citation type="journal article" date="2008" name="BMC Genomics">
        <title>The missing link: Bordetella petrii is endowed with both the metabolic versatility of environmental bacteria and virulence traits of pathogenic Bordetellae.</title>
        <authorList>
            <person name="Gross R."/>
            <person name="Guzman C.A."/>
            <person name="Sebaihia M."/>
            <person name="Martin dos Santos V.A.P."/>
            <person name="Pieper D.H."/>
            <person name="Koebnik R."/>
            <person name="Lechner M."/>
            <person name="Bartels D."/>
            <person name="Buhrmester J."/>
            <person name="Choudhuri J.V."/>
            <person name="Ebensen T."/>
            <person name="Gaigalat L."/>
            <person name="Herrmann S."/>
            <person name="Khachane A.N."/>
            <person name="Larisch C."/>
            <person name="Link S."/>
            <person name="Linke B."/>
            <person name="Meyer F."/>
            <person name="Mormann S."/>
            <person name="Nakunst D."/>
            <person name="Rueckert C."/>
            <person name="Schneiker-Bekel S."/>
            <person name="Schulze K."/>
            <person name="Voerholter F.-J."/>
            <person name="Yevsa T."/>
            <person name="Engle J.T."/>
            <person name="Goldman W.E."/>
            <person name="Puehler A."/>
            <person name="Goebel U.B."/>
            <person name="Goesmann A."/>
            <person name="Bloecker H."/>
            <person name="Kaiser O."/>
            <person name="Martinez-Arias R."/>
        </authorList>
    </citation>
    <scope>NUCLEOTIDE SEQUENCE [LARGE SCALE GENOMIC DNA]</scope>
    <source>
        <strain>ATCC BAA-461 / DSM 12804 / CCUG 43448</strain>
    </source>
</reference>
<comment type="function">
    <text evidence="1">Exhibits a very high intrinsic GTPase hydrolysis rate. Involved in the addition of a carboxymethylaminomethyl (cmnm) group at the wobble position (U34) of certain tRNAs, forming tRNA-cmnm(5)s(2)U34.</text>
</comment>
<comment type="cofactor">
    <cofactor evidence="1">
        <name>K(+)</name>
        <dbReference type="ChEBI" id="CHEBI:29103"/>
    </cofactor>
    <text evidence="1">Binds 1 potassium ion per subunit.</text>
</comment>
<comment type="subunit">
    <text evidence="1">Homodimer. Heterotetramer of two MnmE and two MnmG subunits.</text>
</comment>
<comment type="subcellular location">
    <subcellularLocation>
        <location evidence="1">Cytoplasm</location>
    </subcellularLocation>
</comment>
<comment type="similarity">
    <text evidence="1">Belongs to the TRAFAC class TrmE-Era-EngA-EngB-Septin-like GTPase superfamily. TrmE GTPase family.</text>
</comment>
<sequence length="452" mass="48631">MASSTHVPIAAIATAPGRGGIGVVRISGPDLSALARRLFGRELTPRHAHYLPFTAETGEHLDEGIALYFRAPQSYTGEDVLELQGHGGPAVLRRILERCLQAGADLGVRLAEPGEFTRRAFLNDRMDLAQAEAVADLIDASSVAAARGAMASLSGEFSARVNALSDRIVHLRMLVEATLDFPEEEIDFLEKYQARPTLQALAADLATLIAQARQGVILREGLHVVLAGKPNVGKSSLLNALAGDDIAIVTPIAGTTRDKVVQEIHIDGVPLHIVDTAGLRDTDDTVESIGIARTWKEIERADVILHLQDATQPADELDAQIVARLPARTPLLTVFNKVDLLDQPFQAQAGQLGISAREGAGLDELRARLLALAGWNPGAESPWLARERHVHALQRAAEHLEAATEHAAQDDRVLDLFAEELRLAHDSLSSITGKFTSDDLLGEIFSSFCIGK</sequence>
<name>MNME_BORPD</name>
<evidence type="ECO:0000255" key="1">
    <source>
        <dbReference type="HAMAP-Rule" id="MF_00379"/>
    </source>
</evidence>
<keyword id="KW-0963">Cytoplasm</keyword>
<keyword id="KW-0342">GTP-binding</keyword>
<keyword id="KW-0378">Hydrolase</keyword>
<keyword id="KW-0460">Magnesium</keyword>
<keyword id="KW-0479">Metal-binding</keyword>
<keyword id="KW-0547">Nucleotide-binding</keyword>
<keyword id="KW-0630">Potassium</keyword>
<keyword id="KW-0819">tRNA processing</keyword>